<gene>
    <name type="ordered locus">SPH_0478</name>
</gene>
<evidence type="ECO:0000255" key="1">
    <source>
        <dbReference type="HAMAP-Rule" id="MF_01575"/>
    </source>
</evidence>
<comment type="similarity">
    <text evidence="1">Belongs to the UPF0398 family.</text>
</comment>
<organism>
    <name type="scientific">Streptococcus pneumoniae (strain Hungary19A-6)</name>
    <dbReference type="NCBI Taxonomy" id="487214"/>
    <lineage>
        <taxon>Bacteria</taxon>
        <taxon>Bacillati</taxon>
        <taxon>Bacillota</taxon>
        <taxon>Bacilli</taxon>
        <taxon>Lactobacillales</taxon>
        <taxon>Streptococcaceae</taxon>
        <taxon>Streptococcus</taxon>
    </lineage>
</organism>
<sequence length="175" mass="20777">MATALVLGYSAFDLGLFSDKDPRLKLIKKAIRKDLEAMAADGVSWLVFTGSLGFEYWVLEVAQEMKTEYGFQLATIFAFETHGENWNEDNQMKLSRFKQVDFVKYAYPRYEHKGQLRDYQQFLLENTNSSYLFYDEENETKLAYFYQKMKNQEDYFIKRLTFDQLNELAENFSEN</sequence>
<accession>B1I9H1</accession>
<dbReference type="EMBL" id="CP000936">
    <property type="protein sequence ID" value="ACA36719.1"/>
    <property type="molecule type" value="Genomic_DNA"/>
</dbReference>
<dbReference type="RefSeq" id="WP_000179542.1">
    <property type="nucleotide sequence ID" value="NC_010380.1"/>
</dbReference>
<dbReference type="SMR" id="B1I9H1"/>
<dbReference type="KEGG" id="spv:SPH_0478"/>
<dbReference type="HOGENOM" id="CLU_105319_0_0_9"/>
<dbReference type="Proteomes" id="UP000002163">
    <property type="component" value="Chromosome"/>
</dbReference>
<dbReference type="Gene3D" id="3.40.50.450">
    <property type="match status" value="1"/>
</dbReference>
<dbReference type="HAMAP" id="MF_01575">
    <property type="entry name" value="UPF0398"/>
    <property type="match status" value="1"/>
</dbReference>
<dbReference type="InterPro" id="IPR010697">
    <property type="entry name" value="YspA"/>
</dbReference>
<dbReference type="NCBIfam" id="NF010181">
    <property type="entry name" value="PRK13660.1"/>
    <property type="match status" value="1"/>
</dbReference>
<dbReference type="PANTHER" id="PTHR38440:SF1">
    <property type="entry name" value="UPF0398 PROTEIN SPR0331"/>
    <property type="match status" value="1"/>
</dbReference>
<dbReference type="PANTHER" id="PTHR38440">
    <property type="entry name" value="UPF0398 PROTEIN YPSA"/>
    <property type="match status" value="1"/>
</dbReference>
<dbReference type="Pfam" id="PF06908">
    <property type="entry name" value="YpsA"/>
    <property type="match status" value="1"/>
</dbReference>
<dbReference type="PIRSF" id="PIRSF021290">
    <property type="entry name" value="DUF1273"/>
    <property type="match status" value="1"/>
</dbReference>
<dbReference type="SUPFAM" id="SSF102405">
    <property type="entry name" value="MCP/YpsA-like"/>
    <property type="match status" value="1"/>
</dbReference>
<proteinExistence type="inferred from homology"/>
<reference key="1">
    <citation type="journal article" date="2010" name="Genome Biol.">
        <title>Structure and dynamics of the pan-genome of Streptococcus pneumoniae and closely related species.</title>
        <authorList>
            <person name="Donati C."/>
            <person name="Hiller N.L."/>
            <person name="Tettelin H."/>
            <person name="Muzzi A."/>
            <person name="Croucher N.J."/>
            <person name="Angiuoli S.V."/>
            <person name="Oggioni M."/>
            <person name="Dunning Hotopp J.C."/>
            <person name="Hu F.Z."/>
            <person name="Riley D.R."/>
            <person name="Covacci A."/>
            <person name="Mitchell T.J."/>
            <person name="Bentley S.D."/>
            <person name="Kilian M."/>
            <person name="Ehrlich G.D."/>
            <person name="Rappuoli R."/>
            <person name="Moxon E.R."/>
            <person name="Masignani V."/>
        </authorList>
    </citation>
    <scope>NUCLEOTIDE SEQUENCE [LARGE SCALE GENOMIC DNA]</scope>
    <source>
        <strain>Hungary19A-6</strain>
    </source>
</reference>
<feature type="chain" id="PRO_1000200772" description="UPF0398 protein SPH_0478">
    <location>
        <begin position="1"/>
        <end position="175"/>
    </location>
</feature>
<name>Y478_STRPI</name>
<protein>
    <recommendedName>
        <fullName evidence="1">UPF0398 protein SPH_0478</fullName>
    </recommendedName>
</protein>